<reference key="1">
    <citation type="journal article" date="2005" name="J. Bacteriol.">
        <title>Whole-genome sequence analysis of Pseudomonas syringae pv. phaseolicola 1448A reveals divergence among pathovars in genes involved in virulence and transposition.</title>
        <authorList>
            <person name="Joardar V."/>
            <person name="Lindeberg M."/>
            <person name="Jackson R.W."/>
            <person name="Selengut J."/>
            <person name="Dodson R."/>
            <person name="Brinkac L.M."/>
            <person name="Daugherty S.C."/>
            <person name="DeBoy R.T."/>
            <person name="Durkin A.S."/>
            <person name="Gwinn Giglio M."/>
            <person name="Madupu R."/>
            <person name="Nelson W.C."/>
            <person name="Rosovitz M.J."/>
            <person name="Sullivan S.A."/>
            <person name="Crabtree J."/>
            <person name="Creasy T."/>
            <person name="Davidsen T.M."/>
            <person name="Haft D.H."/>
            <person name="Zafar N."/>
            <person name="Zhou L."/>
            <person name="Halpin R."/>
            <person name="Holley T."/>
            <person name="Khouri H.M."/>
            <person name="Feldblyum T.V."/>
            <person name="White O."/>
            <person name="Fraser C.M."/>
            <person name="Chatterjee A.K."/>
            <person name="Cartinhour S."/>
            <person name="Schneider D."/>
            <person name="Mansfield J.W."/>
            <person name="Collmer A."/>
            <person name="Buell R."/>
        </authorList>
    </citation>
    <scope>NUCLEOTIDE SEQUENCE [LARGE SCALE GENOMIC DNA]</scope>
    <source>
        <strain>1448A / Race 6</strain>
    </source>
</reference>
<feature type="chain" id="PRO_0000374953" description="Ribosomal protein uS12 methylthiotransferase RimO">
    <location>
        <begin position="1"/>
        <end position="447"/>
    </location>
</feature>
<feature type="domain" description="MTTase N-terminal" evidence="1">
    <location>
        <begin position="10"/>
        <end position="120"/>
    </location>
</feature>
<feature type="domain" description="Radical SAM core" evidence="2">
    <location>
        <begin position="139"/>
        <end position="377"/>
    </location>
</feature>
<feature type="domain" description="TRAM" evidence="1">
    <location>
        <begin position="380"/>
        <end position="447"/>
    </location>
</feature>
<feature type="binding site" evidence="1">
    <location>
        <position position="19"/>
    </location>
    <ligand>
        <name>[4Fe-4S] cluster</name>
        <dbReference type="ChEBI" id="CHEBI:49883"/>
        <label>1</label>
    </ligand>
</feature>
<feature type="binding site" evidence="1">
    <location>
        <position position="55"/>
    </location>
    <ligand>
        <name>[4Fe-4S] cluster</name>
        <dbReference type="ChEBI" id="CHEBI:49883"/>
        <label>1</label>
    </ligand>
</feature>
<feature type="binding site" evidence="1">
    <location>
        <position position="84"/>
    </location>
    <ligand>
        <name>[4Fe-4S] cluster</name>
        <dbReference type="ChEBI" id="CHEBI:49883"/>
        <label>1</label>
    </ligand>
</feature>
<feature type="binding site" evidence="1">
    <location>
        <position position="153"/>
    </location>
    <ligand>
        <name>[4Fe-4S] cluster</name>
        <dbReference type="ChEBI" id="CHEBI:49883"/>
        <label>2</label>
        <note>4Fe-4S-S-AdoMet</note>
    </ligand>
</feature>
<feature type="binding site" evidence="1">
    <location>
        <position position="157"/>
    </location>
    <ligand>
        <name>[4Fe-4S] cluster</name>
        <dbReference type="ChEBI" id="CHEBI:49883"/>
        <label>2</label>
        <note>4Fe-4S-S-AdoMet</note>
    </ligand>
</feature>
<feature type="binding site" evidence="1">
    <location>
        <position position="160"/>
    </location>
    <ligand>
        <name>[4Fe-4S] cluster</name>
        <dbReference type="ChEBI" id="CHEBI:49883"/>
        <label>2</label>
        <note>4Fe-4S-S-AdoMet</note>
    </ligand>
</feature>
<protein>
    <recommendedName>
        <fullName evidence="1">Ribosomal protein uS12 methylthiotransferase RimO</fullName>
        <shortName evidence="1">uS12 MTTase</shortName>
        <shortName evidence="1">uS12 methylthiotransferase</shortName>
        <ecNumber evidence="1">2.8.4.4</ecNumber>
    </recommendedName>
    <alternativeName>
        <fullName evidence="1">Ribosomal protein uS12 (aspartate-C(3))-methylthiotransferase</fullName>
    </alternativeName>
    <alternativeName>
        <fullName evidence="1">Ribosome maturation factor RimO</fullName>
    </alternativeName>
</protein>
<name>RIMO_PSE14</name>
<gene>
    <name evidence="1" type="primary">rimO</name>
    <name type="ordered locus">PSPPH_3792</name>
</gene>
<comment type="function">
    <text evidence="1">Catalyzes the methylthiolation of an aspartic acid residue of ribosomal protein uS12.</text>
</comment>
<comment type="catalytic activity">
    <reaction evidence="1">
        <text>L-aspartate(89)-[ribosomal protein uS12]-hydrogen + (sulfur carrier)-SH + AH2 + 2 S-adenosyl-L-methionine = 3-methylsulfanyl-L-aspartate(89)-[ribosomal protein uS12]-hydrogen + (sulfur carrier)-H + 5'-deoxyadenosine + L-methionine + A + S-adenosyl-L-homocysteine + 2 H(+)</text>
        <dbReference type="Rhea" id="RHEA:37087"/>
        <dbReference type="Rhea" id="RHEA-COMP:10460"/>
        <dbReference type="Rhea" id="RHEA-COMP:10461"/>
        <dbReference type="Rhea" id="RHEA-COMP:14737"/>
        <dbReference type="Rhea" id="RHEA-COMP:14739"/>
        <dbReference type="ChEBI" id="CHEBI:13193"/>
        <dbReference type="ChEBI" id="CHEBI:15378"/>
        <dbReference type="ChEBI" id="CHEBI:17319"/>
        <dbReference type="ChEBI" id="CHEBI:17499"/>
        <dbReference type="ChEBI" id="CHEBI:29917"/>
        <dbReference type="ChEBI" id="CHEBI:29961"/>
        <dbReference type="ChEBI" id="CHEBI:57844"/>
        <dbReference type="ChEBI" id="CHEBI:57856"/>
        <dbReference type="ChEBI" id="CHEBI:59789"/>
        <dbReference type="ChEBI" id="CHEBI:64428"/>
        <dbReference type="ChEBI" id="CHEBI:73599"/>
        <dbReference type="EC" id="2.8.4.4"/>
    </reaction>
</comment>
<comment type="cofactor">
    <cofactor evidence="1">
        <name>[4Fe-4S] cluster</name>
        <dbReference type="ChEBI" id="CHEBI:49883"/>
    </cofactor>
    <text evidence="1">Binds 2 [4Fe-4S] clusters. One cluster is coordinated with 3 cysteines and an exchangeable S-adenosyl-L-methionine.</text>
</comment>
<comment type="subcellular location">
    <subcellularLocation>
        <location evidence="1">Cytoplasm</location>
    </subcellularLocation>
</comment>
<comment type="similarity">
    <text evidence="1">Belongs to the methylthiotransferase family. RimO subfamily.</text>
</comment>
<proteinExistence type="inferred from homology"/>
<evidence type="ECO:0000255" key="1">
    <source>
        <dbReference type="HAMAP-Rule" id="MF_01865"/>
    </source>
</evidence>
<evidence type="ECO:0000255" key="2">
    <source>
        <dbReference type="PROSITE-ProRule" id="PRU01266"/>
    </source>
</evidence>
<keyword id="KW-0004">4Fe-4S</keyword>
<keyword id="KW-0963">Cytoplasm</keyword>
<keyword id="KW-0408">Iron</keyword>
<keyword id="KW-0411">Iron-sulfur</keyword>
<keyword id="KW-0479">Metal-binding</keyword>
<keyword id="KW-0949">S-adenosyl-L-methionine</keyword>
<keyword id="KW-0808">Transferase</keyword>
<dbReference type="EC" id="2.8.4.4" evidence="1"/>
<dbReference type="EMBL" id="CP000058">
    <property type="protein sequence ID" value="AAZ37595.1"/>
    <property type="molecule type" value="Genomic_DNA"/>
</dbReference>
<dbReference type="RefSeq" id="WP_002554675.1">
    <property type="nucleotide sequence ID" value="NC_005773.3"/>
</dbReference>
<dbReference type="SMR" id="Q48FA7"/>
<dbReference type="GeneID" id="69858451"/>
<dbReference type="KEGG" id="psp:PSPPH_3792"/>
<dbReference type="eggNOG" id="COG0621">
    <property type="taxonomic scope" value="Bacteria"/>
</dbReference>
<dbReference type="HOGENOM" id="CLU_018697_0_0_6"/>
<dbReference type="Proteomes" id="UP000000551">
    <property type="component" value="Chromosome"/>
</dbReference>
<dbReference type="GO" id="GO:0005829">
    <property type="term" value="C:cytosol"/>
    <property type="evidence" value="ECO:0007669"/>
    <property type="project" value="TreeGrafter"/>
</dbReference>
<dbReference type="GO" id="GO:0051539">
    <property type="term" value="F:4 iron, 4 sulfur cluster binding"/>
    <property type="evidence" value="ECO:0007669"/>
    <property type="project" value="UniProtKB-UniRule"/>
</dbReference>
<dbReference type="GO" id="GO:0035599">
    <property type="term" value="F:aspartic acid methylthiotransferase activity"/>
    <property type="evidence" value="ECO:0007669"/>
    <property type="project" value="TreeGrafter"/>
</dbReference>
<dbReference type="GO" id="GO:0046872">
    <property type="term" value="F:metal ion binding"/>
    <property type="evidence" value="ECO:0007669"/>
    <property type="project" value="UniProtKB-KW"/>
</dbReference>
<dbReference type="GO" id="GO:0103039">
    <property type="term" value="F:protein methylthiotransferase activity"/>
    <property type="evidence" value="ECO:0007669"/>
    <property type="project" value="UniProtKB-EC"/>
</dbReference>
<dbReference type="GO" id="GO:0006400">
    <property type="term" value="P:tRNA modification"/>
    <property type="evidence" value="ECO:0007669"/>
    <property type="project" value="InterPro"/>
</dbReference>
<dbReference type="CDD" id="cd01335">
    <property type="entry name" value="Radical_SAM"/>
    <property type="match status" value="1"/>
</dbReference>
<dbReference type="FunFam" id="2.40.50.140:FF:000060">
    <property type="entry name" value="Ribosomal protein S12 methylthiotransferase RimO"/>
    <property type="match status" value="1"/>
</dbReference>
<dbReference type="FunFam" id="3.40.50.12160:FF:000002">
    <property type="entry name" value="Ribosomal protein S12 methylthiotransferase RimO"/>
    <property type="match status" value="1"/>
</dbReference>
<dbReference type="FunFam" id="3.80.30.20:FF:000001">
    <property type="entry name" value="tRNA-2-methylthio-N(6)-dimethylallyladenosine synthase 2"/>
    <property type="match status" value="1"/>
</dbReference>
<dbReference type="Gene3D" id="3.40.50.12160">
    <property type="entry name" value="Methylthiotransferase, N-terminal domain"/>
    <property type="match status" value="1"/>
</dbReference>
<dbReference type="Gene3D" id="2.40.50.140">
    <property type="entry name" value="Nucleic acid-binding proteins"/>
    <property type="match status" value="1"/>
</dbReference>
<dbReference type="Gene3D" id="3.80.30.20">
    <property type="entry name" value="tm_1862 like domain"/>
    <property type="match status" value="1"/>
</dbReference>
<dbReference type="HAMAP" id="MF_01865">
    <property type="entry name" value="MTTase_RimO"/>
    <property type="match status" value="1"/>
</dbReference>
<dbReference type="InterPro" id="IPR006638">
    <property type="entry name" value="Elp3/MiaA/NifB-like_rSAM"/>
</dbReference>
<dbReference type="InterPro" id="IPR005839">
    <property type="entry name" value="Methylthiotransferase"/>
</dbReference>
<dbReference type="InterPro" id="IPR020612">
    <property type="entry name" value="Methylthiotransferase_CS"/>
</dbReference>
<dbReference type="InterPro" id="IPR013848">
    <property type="entry name" value="Methylthiotransferase_N"/>
</dbReference>
<dbReference type="InterPro" id="IPR038135">
    <property type="entry name" value="Methylthiotransferase_N_sf"/>
</dbReference>
<dbReference type="InterPro" id="IPR012340">
    <property type="entry name" value="NA-bd_OB-fold"/>
</dbReference>
<dbReference type="InterPro" id="IPR005840">
    <property type="entry name" value="Ribosomal_uS12_MeSTrfase_RimO"/>
</dbReference>
<dbReference type="InterPro" id="IPR007197">
    <property type="entry name" value="rSAM"/>
</dbReference>
<dbReference type="InterPro" id="IPR023404">
    <property type="entry name" value="rSAM_horseshoe"/>
</dbReference>
<dbReference type="InterPro" id="IPR002792">
    <property type="entry name" value="TRAM_dom"/>
</dbReference>
<dbReference type="NCBIfam" id="TIGR01125">
    <property type="entry name" value="30S ribosomal protein S12 methylthiotransferase RimO"/>
    <property type="match status" value="1"/>
</dbReference>
<dbReference type="NCBIfam" id="TIGR00089">
    <property type="entry name" value="MiaB/RimO family radical SAM methylthiotransferase"/>
    <property type="match status" value="1"/>
</dbReference>
<dbReference type="PANTHER" id="PTHR43837">
    <property type="entry name" value="RIBOSOMAL PROTEIN S12 METHYLTHIOTRANSFERASE RIMO"/>
    <property type="match status" value="1"/>
</dbReference>
<dbReference type="PANTHER" id="PTHR43837:SF1">
    <property type="entry name" value="RIBOSOMAL PROTEIN US12 METHYLTHIOTRANSFERASE RIMO"/>
    <property type="match status" value="1"/>
</dbReference>
<dbReference type="Pfam" id="PF04055">
    <property type="entry name" value="Radical_SAM"/>
    <property type="match status" value="1"/>
</dbReference>
<dbReference type="Pfam" id="PF18693">
    <property type="entry name" value="TRAM_2"/>
    <property type="match status" value="1"/>
</dbReference>
<dbReference type="Pfam" id="PF00919">
    <property type="entry name" value="UPF0004"/>
    <property type="match status" value="1"/>
</dbReference>
<dbReference type="SFLD" id="SFLDG01082">
    <property type="entry name" value="B12-binding_domain_containing"/>
    <property type="match status" value="1"/>
</dbReference>
<dbReference type="SFLD" id="SFLDG01061">
    <property type="entry name" value="methylthiotransferase"/>
    <property type="match status" value="1"/>
</dbReference>
<dbReference type="SFLD" id="SFLDF00274">
    <property type="entry name" value="ribosomal_protein_S12_methylth"/>
    <property type="match status" value="1"/>
</dbReference>
<dbReference type="SMART" id="SM00729">
    <property type="entry name" value="Elp3"/>
    <property type="match status" value="1"/>
</dbReference>
<dbReference type="SUPFAM" id="SSF102114">
    <property type="entry name" value="Radical SAM enzymes"/>
    <property type="match status" value="1"/>
</dbReference>
<dbReference type="PROSITE" id="PS51449">
    <property type="entry name" value="MTTASE_N"/>
    <property type="match status" value="1"/>
</dbReference>
<dbReference type="PROSITE" id="PS01278">
    <property type="entry name" value="MTTASE_RADICAL"/>
    <property type="match status" value="1"/>
</dbReference>
<dbReference type="PROSITE" id="PS51918">
    <property type="entry name" value="RADICAL_SAM"/>
    <property type="match status" value="1"/>
</dbReference>
<dbReference type="PROSITE" id="PS50926">
    <property type="entry name" value="TRAM"/>
    <property type="match status" value="1"/>
</dbReference>
<organism>
    <name type="scientific">Pseudomonas savastanoi pv. phaseolicola (strain 1448A / Race 6)</name>
    <name type="common">Pseudomonas syringae pv. phaseolicola (strain 1448A / Race 6)</name>
    <dbReference type="NCBI Taxonomy" id="264730"/>
    <lineage>
        <taxon>Bacteria</taxon>
        <taxon>Pseudomonadati</taxon>
        <taxon>Pseudomonadota</taxon>
        <taxon>Gammaproteobacteria</taxon>
        <taxon>Pseudomonadales</taxon>
        <taxon>Pseudomonadaceae</taxon>
        <taxon>Pseudomonas</taxon>
    </lineage>
</organism>
<accession>Q48FA7</accession>
<sequence>MSTVTTPSAPKVGFVSLGCPKALVDSERILTQLRMEGYEVVATYEDADVVVVNTCGFIDTAKAESLEVIGEAIKENGKVIVTGCMGVDANVIRDVHPSVLSVTGPQQYEQVVNAVHDVVPPRKDHNPLIDLVPPQGVKLTPRHYAYLKISEGCNHSCSFCIIPSMRGKLVSRPVGDVLDEAKRLVKSGVKELLVISQDTSAYGVDVKYRTGFWDGQPVKTRMTELCQALGSMGVWVRLHYVYPYPHVDELIPLMAAGKILPYLDIPFQHASPKILKLMKRPAFEDKTLARIKNWREQCPDLIIRSTFIVGFPGETEEDFQYLLDWLTEAQLDRVGCFQYSPVEGAPANLLDAAIVPDDVKQDRWDRFMAHQQAISAARLQMKIGKEIEVLIDEVDDRGAVGRCFFDAPEIDGNVFIGLEEGSTVQPGDKIMCRVTDADEYDLWAEML</sequence>